<organism>
    <name type="scientific">Sulfurisphaera tokodaii (strain DSM 16993 / JCM 10545 / NBRC 100140 / 7)</name>
    <name type="common">Sulfolobus tokodaii</name>
    <dbReference type="NCBI Taxonomy" id="273063"/>
    <lineage>
        <taxon>Archaea</taxon>
        <taxon>Thermoproteota</taxon>
        <taxon>Thermoprotei</taxon>
        <taxon>Sulfolobales</taxon>
        <taxon>Sulfolobaceae</taxon>
        <taxon>Sulfurisphaera</taxon>
    </lineage>
</organism>
<accession>P58469</accession>
<reference key="1">
    <citation type="journal article" date="2001" name="DNA Res.">
        <title>Complete genome sequence of an aerobic thermoacidophilic Crenarchaeon, Sulfolobus tokodaii strain7.</title>
        <authorList>
            <person name="Kawarabayasi Y."/>
            <person name="Hino Y."/>
            <person name="Horikawa H."/>
            <person name="Jin-no K."/>
            <person name="Takahashi M."/>
            <person name="Sekine M."/>
            <person name="Baba S."/>
            <person name="Ankai A."/>
            <person name="Kosugi H."/>
            <person name="Hosoyama A."/>
            <person name="Fukui S."/>
            <person name="Nagai Y."/>
            <person name="Nishijima K."/>
            <person name="Otsuka R."/>
            <person name="Nakazawa H."/>
            <person name="Takamiya M."/>
            <person name="Kato Y."/>
            <person name="Yoshizawa T."/>
            <person name="Tanaka T."/>
            <person name="Kudoh Y."/>
            <person name="Yamazaki J."/>
            <person name="Kushida N."/>
            <person name="Oguchi A."/>
            <person name="Aoki K."/>
            <person name="Masuda S."/>
            <person name="Yanagii M."/>
            <person name="Nishimura M."/>
            <person name="Yamagishi A."/>
            <person name="Oshima T."/>
            <person name="Kikuchi H."/>
        </authorList>
    </citation>
    <scope>NUCLEOTIDE SEQUENCE [LARGE SCALE GENOMIC DNA]</scope>
    <source>
        <strain>DSM 16993 / JCM 10545 / NBRC 100140 / 7</strain>
    </source>
</reference>
<keyword id="KW-1185">Reference proteome</keyword>
<keyword id="KW-0687">Ribonucleoprotein</keyword>
<keyword id="KW-0689">Ribosomal protein</keyword>
<gene>
    <name evidence="1" type="primary">rpl13e</name>
    <name type="ordered locus">STK_07085</name>
    <name type="ORF">STS087</name>
</gene>
<feature type="chain" id="PRO_0000192942" description="Large ribosomal subunit protein eL13">
    <location>
        <begin position="1"/>
        <end position="77"/>
    </location>
</feature>
<dbReference type="EMBL" id="BA000023">
    <property type="protein sequence ID" value="BAB65716.1"/>
    <property type="molecule type" value="Genomic_DNA"/>
</dbReference>
<dbReference type="RefSeq" id="WP_010978699.1">
    <property type="nucleotide sequence ID" value="NC_003106.2"/>
</dbReference>
<dbReference type="SMR" id="P58469"/>
<dbReference type="STRING" id="273063.STK_07085"/>
<dbReference type="GeneID" id="1458666"/>
<dbReference type="KEGG" id="sto:STK_07085"/>
<dbReference type="PATRIC" id="fig|273063.9.peg.800"/>
<dbReference type="eggNOG" id="arCOG01013">
    <property type="taxonomic scope" value="Archaea"/>
</dbReference>
<dbReference type="OrthoDB" id="17872at2157"/>
<dbReference type="Proteomes" id="UP000001015">
    <property type="component" value="Chromosome"/>
</dbReference>
<dbReference type="GO" id="GO:1990904">
    <property type="term" value="C:ribonucleoprotein complex"/>
    <property type="evidence" value="ECO:0007669"/>
    <property type="project" value="UniProtKB-KW"/>
</dbReference>
<dbReference type="GO" id="GO:0005840">
    <property type="term" value="C:ribosome"/>
    <property type="evidence" value="ECO:0007669"/>
    <property type="project" value="UniProtKB-KW"/>
</dbReference>
<dbReference type="GO" id="GO:0003735">
    <property type="term" value="F:structural constituent of ribosome"/>
    <property type="evidence" value="ECO:0007669"/>
    <property type="project" value="InterPro"/>
</dbReference>
<dbReference type="GO" id="GO:0006412">
    <property type="term" value="P:translation"/>
    <property type="evidence" value="ECO:0007669"/>
    <property type="project" value="UniProtKB-UniRule"/>
</dbReference>
<dbReference type="HAMAP" id="MF_00499">
    <property type="entry name" value="Ribosomal_eL13"/>
    <property type="match status" value="1"/>
</dbReference>
<dbReference type="InterPro" id="IPR001380">
    <property type="entry name" value="Ribosomal_eL13"/>
</dbReference>
<dbReference type="InterPro" id="IPR018256">
    <property type="entry name" value="Ribosomal_eL13_CS"/>
</dbReference>
<dbReference type="NCBIfam" id="NF008914">
    <property type="entry name" value="PRK12277.1"/>
    <property type="match status" value="1"/>
</dbReference>
<dbReference type="Pfam" id="PF01294">
    <property type="entry name" value="Ribosomal_L13e"/>
    <property type="match status" value="1"/>
</dbReference>
<dbReference type="PROSITE" id="PS01104">
    <property type="entry name" value="RIBOSOMAL_L13E"/>
    <property type="match status" value="1"/>
</dbReference>
<proteinExistence type="inferred from homology"/>
<protein>
    <recommendedName>
        <fullName evidence="1">Large ribosomal subunit protein eL13</fullName>
    </recommendedName>
    <alternativeName>
        <fullName evidence="2">50S ribosomal protein L13e</fullName>
    </alternativeName>
</protein>
<sequence length="77" mass="9226">MVEPIVKRPHYRFEIRKKDTKIGKGFSLKELKESGFSVQEAKKLRVRIDKRRKTSYPENVEVLKKLKEQLQQKKQAQ</sequence>
<comment type="similarity">
    <text evidence="1">Belongs to the eukaryotic ribosomal protein eL13 family.</text>
</comment>
<evidence type="ECO:0000255" key="1">
    <source>
        <dbReference type="HAMAP-Rule" id="MF_00499"/>
    </source>
</evidence>
<evidence type="ECO:0000305" key="2"/>
<name>RL13E_SULTO</name>